<comment type="function">
    <text evidence="1">Isomerase that catalyzes the conversion of deoxy-ribose 1-phosphate (dRib-1-P) and ribose 1-phosphate (Rib-1-P) to deoxy-ribose 5-phosphate (dRib-5-P) and ribose 5-phosphate (Rib-5-P), respectively.</text>
</comment>
<comment type="catalytic activity">
    <reaction evidence="1">
        <text>2-deoxy-alpha-D-ribose 1-phosphate = 2-deoxy-D-ribose 5-phosphate</text>
        <dbReference type="Rhea" id="RHEA:27658"/>
        <dbReference type="ChEBI" id="CHEBI:57259"/>
        <dbReference type="ChEBI" id="CHEBI:62877"/>
        <dbReference type="EC" id="5.4.2.7"/>
    </reaction>
</comment>
<comment type="catalytic activity">
    <reaction evidence="1">
        <text>alpha-D-ribose 1-phosphate = D-ribose 5-phosphate</text>
        <dbReference type="Rhea" id="RHEA:18793"/>
        <dbReference type="ChEBI" id="CHEBI:57720"/>
        <dbReference type="ChEBI" id="CHEBI:78346"/>
        <dbReference type="EC" id="5.4.2.7"/>
    </reaction>
</comment>
<comment type="cofactor">
    <cofactor evidence="1">
        <name>Mn(2+)</name>
        <dbReference type="ChEBI" id="CHEBI:29035"/>
    </cofactor>
    <text evidence="1">Binds 2 manganese ions.</text>
</comment>
<comment type="pathway">
    <text evidence="1">Carbohydrate degradation; 2-deoxy-D-ribose 1-phosphate degradation; D-glyceraldehyde 3-phosphate and acetaldehyde from 2-deoxy-alpha-D-ribose 1-phosphate: step 1/2.</text>
</comment>
<comment type="subcellular location">
    <subcellularLocation>
        <location evidence="1">Cytoplasm</location>
    </subcellularLocation>
</comment>
<comment type="similarity">
    <text evidence="1">Belongs to the phosphopentomutase family.</text>
</comment>
<sequence>MKKYNRIFVIVLDSLGIGAMPDSERFGDTDVDTFGHILERMQTLDIPNLTRLGMLNLHCGGQMQPAAEPIGRFTRLAEASNGKDTMTGHWEMMGIKTEKPFKTFTEHGFPPELIAELEKQCGKKVIGNKSASGTEIIEELGEEEIKNGSMIVYTSADSVLQICGNEETFDLQNLYRCCEIARKITLKDEWRVGRVIARPYVGKKKGEFVRTSNRHDYALKPTGLTALNALKDSGLDVISVGKINDIFCGEGITEAFRSKSSVHGMEQTIDICEKDFTGLCFVNLVDFDALWGHRRNVTGYGEEIEKFDKNLGILMEKLRDDDLLILTADHGNDPTYKGTDHTREYVPFIAYSKSMKGGGAIEEEATFAVIGATITDNFGVKMPEGTIGHSILEEL</sequence>
<reference key="1">
    <citation type="journal article" date="2009" name="Proc. Natl. Acad. Sci. U.S.A.">
        <title>Characterizing a model human gut microbiota composed of members of its two dominant bacterial phyla.</title>
        <authorList>
            <person name="Mahowald M.A."/>
            <person name="Rey F.E."/>
            <person name="Seedorf H."/>
            <person name="Turnbaugh P.J."/>
            <person name="Fulton R.S."/>
            <person name="Wollam A."/>
            <person name="Shah N."/>
            <person name="Wang C."/>
            <person name="Magrini V."/>
            <person name="Wilson R.K."/>
            <person name="Cantarel B.L."/>
            <person name="Coutinho P.M."/>
            <person name="Henrissat B."/>
            <person name="Crock L.W."/>
            <person name="Russell A."/>
            <person name="Verberkmoes N.C."/>
            <person name="Hettich R.L."/>
            <person name="Gordon J.I."/>
        </authorList>
    </citation>
    <scope>NUCLEOTIDE SEQUENCE [LARGE SCALE GENOMIC DNA]</scope>
    <source>
        <strain>ATCC 33656 / DSM 3377 / JCM 17463 / KCTC 5835 / LMG 30912 / VPI 0990</strain>
    </source>
</reference>
<feature type="chain" id="PRO_1000212809" description="Phosphopentomutase">
    <location>
        <begin position="1"/>
        <end position="395"/>
    </location>
</feature>
<feature type="binding site" evidence="1">
    <location>
        <position position="13"/>
    </location>
    <ligand>
        <name>Mn(2+)</name>
        <dbReference type="ChEBI" id="CHEBI:29035"/>
        <label>1</label>
    </ligand>
</feature>
<feature type="binding site" evidence="1">
    <location>
        <position position="288"/>
    </location>
    <ligand>
        <name>Mn(2+)</name>
        <dbReference type="ChEBI" id="CHEBI:29035"/>
        <label>2</label>
    </ligand>
</feature>
<feature type="binding site" evidence="1">
    <location>
        <position position="293"/>
    </location>
    <ligand>
        <name>Mn(2+)</name>
        <dbReference type="ChEBI" id="CHEBI:29035"/>
        <label>2</label>
    </ligand>
</feature>
<feature type="binding site" evidence="1">
    <location>
        <position position="329"/>
    </location>
    <ligand>
        <name>Mn(2+)</name>
        <dbReference type="ChEBI" id="CHEBI:29035"/>
        <label>1</label>
    </ligand>
</feature>
<feature type="binding site" evidence="1">
    <location>
        <position position="330"/>
    </location>
    <ligand>
        <name>Mn(2+)</name>
        <dbReference type="ChEBI" id="CHEBI:29035"/>
        <label>1</label>
    </ligand>
</feature>
<feature type="binding site" evidence="1">
    <location>
        <position position="341"/>
    </location>
    <ligand>
        <name>Mn(2+)</name>
        <dbReference type="ChEBI" id="CHEBI:29035"/>
        <label>2</label>
    </ligand>
</feature>
<accession>C4ZB25</accession>
<name>DEOB_AGARV</name>
<proteinExistence type="inferred from homology"/>
<evidence type="ECO:0000255" key="1">
    <source>
        <dbReference type="HAMAP-Rule" id="MF_00740"/>
    </source>
</evidence>
<organism>
    <name type="scientific">Agathobacter rectalis (strain ATCC 33656 / DSM 3377 / JCM 17463 / KCTC 5835 / VPI 0990)</name>
    <name type="common">Eubacterium rectale</name>
    <dbReference type="NCBI Taxonomy" id="515619"/>
    <lineage>
        <taxon>Bacteria</taxon>
        <taxon>Bacillati</taxon>
        <taxon>Bacillota</taxon>
        <taxon>Clostridia</taxon>
        <taxon>Lachnospirales</taxon>
        <taxon>Lachnospiraceae</taxon>
        <taxon>Agathobacter</taxon>
    </lineage>
</organism>
<protein>
    <recommendedName>
        <fullName evidence="1">Phosphopentomutase</fullName>
        <ecNumber evidence="1">5.4.2.7</ecNumber>
    </recommendedName>
    <alternativeName>
        <fullName evidence="1">Phosphodeoxyribomutase</fullName>
    </alternativeName>
</protein>
<gene>
    <name evidence="1" type="primary">deoB</name>
    <name type="ordered locus">EUBREC_0296</name>
</gene>
<dbReference type="EC" id="5.4.2.7" evidence="1"/>
<dbReference type="EMBL" id="CP001107">
    <property type="protein sequence ID" value="ACR74100.1"/>
    <property type="molecule type" value="Genomic_DNA"/>
</dbReference>
<dbReference type="RefSeq" id="WP_012741221.1">
    <property type="nucleotide sequence ID" value="NC_012781.1"/>
</dbReference>
<dbReference type="SMR" id="C4ZB25"/>
<dbReference type="STRING" id="515619.EUBREC_0296"/>
<dbReference type="PaxDb" id="515619-EUBREC_0296"/>
<dbReference type="GeneID" id="86987216"/>
<dbReference type="KEGG" id="ere:EUBREC_0296"/>
<dbReference type="HOGENOM" id="CLU_053861_0_0_9"/>
<dbReference type="UniPathway" id="UPA00002">
    <property type="reaction ID" value="UER00467"/>
</dbReference>
<dbReference type="Proteomes" id="UP000001477">
    <property type="component" value="Chromosome"/>
</dbReference>
<dbReference type="GO" id="GO:0005829">
    <property type="term" value="C:cytosol"/>
    <property type="evidence" value="ECO:0007669"/>
    <property type="project" value="TreeGrafter"/>
</dbReference>
<dbReference type="GO" id="GO:0000287">
    <property type="term" value="F:magnesium ion binding"/>
    <property type="evidence" value="ECO:0007669"/>
    <property type="project" value="InterPro"/>
</dbReference>
<dbReference type="GO" id="GO:0030145">
    <property type="term" value="F:manganese ion binding"/>
    <property type="evidence" value="ECO:0007669"/>
    <property type="project" value="UniProtKB-UniRule"/>
</dbReference>
<dbReference type="GO" id="GO:0008973">
    <property type="term" value="F:phosphopentomutase activity"/>
    <property type="evidence" value="ECO:0007669"/>
    <property type="project" value="UniProtKB-UniRule"/>
</dbReference>
<dbReference type="GO" id="GO:0006018">
    <property type="term" value="P:2-deoxyribose 1-phosphate catabolic process"/>
    <property type="evidence" value="ECO:0007669"/>
    <property type="project" value="UniProtKB-UniRule"/>
</dbReference>
<dbReference type="GO" id="GO:0006015">
    <property type="term" value="P:5-phosphoribose 1-diphosphate biosynthetic process"/>
    <property type="evidence" value="ECO:0007669"/>
    <property type="project" value="UniProtKB-UniPathway"/>
</dbReference>
<dbReference type="GO" id="GO:0043094">
    <property type="term" value="P:metabolic compound salvage"/>
    <property type="evidence" value="ECO:0007669"/>
    <property type="project" value="InterPro"/>
</dbReference>
<dbReference type="GO" id="GO:0009117">
    <property type="term" value="P:nucleotide metabolic process"/>
    <property type="evidence" value="ECO:0007669"/>
    <property type="project" value="InterPro"/>
</dbReference>
<dbReference type="CDD" id="cd16009">
    <property type="entry name" value="PPM"/>
    <property type="match status" value="1"/>
</dbReference>
<dbReference type="FunFam" id="3.30.70.1250:FF:000001">
    <property type="entry name" value="Phosphopentomutase"/>
    <property type="match status" value="1"/>
</dbReference>
<dbReference type="Gene3D" id="3.40.720.10">
    <property type="entry name" value="Alkaline Phosphatase, subunit A"/>
    <property type="match status" value="1"/>
</dbReference>
<dbReference type="Gene3D" id="3.30.70.1250">
    <property type="entry name" value="Phosphopentomutase"/>
    <property type="match status" value="1"/>
</dbReference>
<dbReference type="HAMAP" id="MF_00740">
    <property type="entry name" value="Phosphopentomut"/>
    <property type="match status" value="1"/>
</dbReference>
<dbReference type="InterPro" id="IPR017850">
    <property type="entry name" value="Alkaline_phosphatase_core_sf"/>
</dbReference>
<dbReference type="InterPro" id="IPR010045">
    <property type="entry name" value="DeoB"/>
</dbReference>
<dbReference type="InterPro" id="IPR006124">
    <property type="entry name" value="Metalloenzyme"/>
</dbReference>
<dbReference type="InterPro" id="IPR024052">
    <property type="entry name" value="Phosphopentomutase_DeoB_cap_sf"/>
</dbReference>
<dbReference type="NCBIfam" id="TIGR01696">
    <property type="entry name" value="deoB"/>
    <property type="match status" value="1"/>
</dbReference>
<dbReference type="NCBIfam" id="NF003766">
    <property type="entry name" value="PRK05362.1"/>
    <property type="match status" value="1"/>
</dbReference>
<dbReference type="PANTHER" id="PTHR21110">
    <property type="entry name" value="PHOSPHOPENTOMUTASE"/>
    <property type="match status" value="1"/>
</dbReference>
<dbReference type="PANTHER" id="PTHR21110:SF0">
    <property type="entry name" value="PHOSPHOPENTOMUTASE"/>
    <property type="match status" value="1"/>
</dbReference>
<dbReference type="Pfam" id="PF01676">
    <property type="entry name" value="Metalloenzyme"/>
    <property type="match status" value="1"/>
</dbReference>
<dbReference type="PIRSF" id="PIRSF001491">
    <property type="entry name" value="Ppentomutase"/>
    <property type="match status" value="1"/>
</dbReference>
<dbReference type="SUPFAM" id="SSF53649">
    <property type="entry name" value="Alkaline phosphatase-like"/>
    <property type="match status" value="1"/>
</dbReference>
<dbReference type="SUPFAM" id="SSF143856">
    <property type="entry name" value="DeoB insert domain-like"/>
    <property type="match status" value="1"/>
</dbReference>
<keyword id="KW-0963">Cytoplasm</keyword>
<keyword id="KW-0413">Isomerase</keyword>
<keyword id="KW-0464">Manganese</keyword>
<keyword id="KW-0479">Metal-binding</keyword>